<reference key="1">
    <citation type="submission" date="2005-09" db="EMBL/GenBank/DDBJ databases">
        <authorList>
            <person name="Mural R.J."/>
            <person name="Istrail S."/>
            <person name="Sutton G.G."/>
            <person name="Florea L."/>
            <person name="Halpern A.L."/>
            <person name="Mobarry C.M."/>
            <person name="Lippert R."/>
            <person name="Walenz B."/>
            <person name="Shatkay H."/>
            <person name="Dew I."/>
            <person name="Miller J.R."/>
            <person name="Flanigan M.J."/>
            <person name="Edwards N.J."/>
            <person name="Bolanos R."/>
            <person name="Fasulo D."/>
            <person name="Halldorsson B.V."/>
            <person name="Hannenhalli S."/>
            <person name="Turner R."/>
            <person name="Yooseph S."/>
            <person name="Lu F."/>
            <person name="Nusskern D.R."/>
            <person name="Shue B.C."/>
            <person name="Zheng X.H."/>
            <person name="Zhong F."/>
            <person name="Delcher A.L."/>
            <person name="Huson D.H."/>
            <person name="Kravitz S.A."/>
            <person name="Mouchard L."/>
            <person name="Reinert K."/>
            <person name="Remington K.A."/>
            <person name="Clark A.G."/>
            <person name="Waterman M.S."/>
            <person name="Eichler E.E."/>
            <person name="Adams M.D."/>
            <person name="Hunkapiller M.W."/>
            <person name="Myers E.W."/>
            <person name="Venter J.C."/>
        </authorList>
    </citation>
    <scope>NUCLEOTIDE SEQUENCE [LARGE SCALE GENOMIC DNA]</scope>
</reference>
<reference key="2">
    <citation type="journal article" date="2004" name="Genome Res.">
        <title>The status, quality, and expansion of the NIH full-length cDNA project: the Mammalian Gene Collection (MGC).</title>
        <authorList>
            <consortium name="The MGC Project Team"/>
        </authorList>
    </citation>
    <scope>NUCLEOTIDE SEQUENCE [LARGE SCALE MRNA]</scope>
    <source>
        <tissue>Eye</tissue>
        <tissue>Skin</tissue>
    </source>
</reference>
<reference key="3">
    <citation type="journal article" date="2002" name="J. Mol. Endocrinol.">
        <title>Identification and characterization of a human cDNA and gene encoding a ubiquitously expressed glucose-6-phosphatase catalytic subunit-related protein.</title>
        <authorList>
            <person name="Martin C.C."/>
            <person name="Oeser J.K."/>
            <person name="Svitek C.A."/>
            <person name="Hunter S.I."/>
            <person name="Hutton J.C."/>
            <person name="O'Brien R.M."/>
        </authorList>
    </citation>
    <scope>FUNCTION</scope>
    <scope>TISSUE SPECIFICITY</scope>
</reference>
<reference key="4">
    <citation type="journal article" date="2003" name="FEBS Lett.">
        <title>Identification and characterisation of a new human glucose-6-phosphatase isoform.</title>
        <authorList>
            <person name="Guionie O."/>
            <person name="Clottes E."/>
            <person name="Stafford K."/>
            <person name="Burchell A."/>
        </authorList>
    </citation>
    <scope>FUNCTION</scope>
    <scope>CATALYTIC ACTIVITY</scope>
    <scope>BIOPHYSICOCHEMICAL PROPERTIES</scope>
    <scope>TISSUE SPECIFICITY</scope>
</reference>
<reference key="5">
    <citation type="journal article" date="2003" name="J. Biol. Chem.">
        <title>A glucose-6-phosphate hydrolase, widely expressed outside the liver, can explain age-dependent resolution of hypoglycemia in glycogen storage disease type Ia.</title>
        <authorList>
            <person name="Shieh J.-J."/>
            <person name="Pan C.-J."/>
            <person name="Mansfield B.C."/>
            <person name="Chou J.Y."/>
        </authorList>
    </citation>
    <scope>FUNCTION</scope>
    <scope>BIOPHYSICOCHEMICAL PROPERTIES</scope>
    <scope>ACTIVITY REGULATION</scope>
    <scope>SUBCELLULAR LOCATION</scope>
    <scope>MUTAGENESIS OF ARG-79; HIS-114 AND HIS-167</scope>
</reference>
<reference key="6">
    <citation type="journal article" date="2004" name="J. Biol. Chem.">
        <title>Histidine 167 is the phosphate acceptor in glucose-6-phosphatase-beta forming a phosphohistidine enzyme intermediate during catalysis.</title>
        <authorList>
            <person name="Ghosh A."/>
            <person name="Shieh J.-J."/>
            <person name="Pan C.-J."/>
            <person name="Chou J.Y."/>
        </authorList>
    </citation>
    <scope>TOPOLOGY</scope>
    <scope>ACTIVE SITE</scope>
</reference>
<reference key="7">
    <citation type="journal article" date="2004" name="J. Mol. Endocrinol.">
        <title>Identification and characterization of a cDNA and the gene encoding the mouse ubiquitously expressed glucose-6-phosphatase catalytic subunit-related protein.</title>
        <authorList>
            <person name="Boustead J.N."/>
            <person name="Martin C.C."/>
            <person name="Oeser J.K."/>
            <person name="Svitek C.A."/>
            <person name="Hunter S.I."/>
            <person name="Hutton J.C."/>
            <person name="O'Brien R.M."/>
        </authorList>
    </citation>
    <scope>TISSUE SPECIFICITY</scope>
</reference>
<reference key="8">
    <citation type="journal article" date="2009" name="N. Engl. J. Med.">
        <title>A syndrome with congenital neutropenia and mutations in G6PC3.</title>
        <authorList>
            <person name="Boztug K."/>
            <person name="Appaswamy G."/>
            <person name="Ashikov A."/>
            <person name="Schaeffer A.A."/>
            <person name="Salzer U."/>
            <person name="Diestelhorst J."/>
            <person name="Germeshausen M."/>
            <person name="Brandes G."/>
            <person name="Lee-Gossler J."/>
            <person name="Noyan F."/>
            <person name="Gatzke A.-K."/>
            <person name="Minkov M."/>
            <person name="Greil J."/>
            <person name="Kratz C."/>
            <person name="Petropoulou T."/>
            <person name="Pellier I."/>
            <person name="Bellanne-Chantelot C."/>
            <person name="Rezaei N."/>
            <person name="Moenkemoeller K."/>
            <person name="Irani-Hakimeh N."/>
            <person name="Bakker H."/>
            <person name="Gerardy-Schahn R."/>
            <person name="Zeidler C."/>
            <person name="Grimbacher B."/>
            <person name="Welte K."/>
            <person name="Klein C."/>
        </authorList>
    </citation>
    <scope>VARIANTS SCN4 PRO-185; HIS-253 AND ARG-262</scope>
    <scope>CHARACTERIZATION OF VARIANT SCN4 HIS-253</scope>
</reference>
<reference key="9">
    <citation type="journal article" date="2010" name="Am. J. Med. Genet. A">
        <title>Mutations in the G6PC3 gene cause Dursun syndrome.</title>
        <authorList>
            <person name="Banka S."/>
            <person name="Newman W.G."/>
            <person name="Ozgul R.K."/>
            <person name="Dursun A."/>
        </authorList>
    </citation>
    <scope>VARIANT DURSS VAL-116</scope>
</reference>
<reference key="10">
    <citation type="journal article" date="2010" name="Blood">
        <title>Severe congenital neutropenia resulting from G6PC3 deficiency with increased neutrophil CXCR4 expression and myelokathexis.</title>
        <authorList>
            <person name="McDermott D.H."/>
            <person name="De Ravin S.S."/>
            <person name="Jun H.S."/>
            <person name="Liu Q."/>
            <person name="Priel D.A."/>
            <person name="Noel P."/>
            <person name="Takemoto C.M."/>
            <person name="Ojode T."/>
            <person name="Paul S.M."/>
            <person name="Dunsmore K.P."/>
            <person name="Hilligoss D."/>
            <person name="Marquesen M."/>
            <person name="Ulrick J."/>
            <person name="Kuhns D.B."/>
            <person name="Chou J.Y."/>
            <person name="Malech H.L."/>
            <person name="Murphy P.M."/>
        </authorList>
    </citation>
    <scope>VARIANT SCN4 ARG-260</scope>
    <scope>CHARACTERIZATION OF VARIANT SCN4 ARG-260</scope>
</reference>
<reference key="11">
    <citation type="journal article" date="2010" name="Haematologica">
        <title>Digenic mutations in severe congenital neutropenia.</title>
        <authorList>
            <person name="Germeshausen M."/>
            <person name="Zeidler C."/>
            <person name="Stuhrmann M."/>
            <person name="Lanciotti M."/>
            <person name="Ballmaier M."/>
            <person name="Welte K."/>
        </authorList>
    </citation>
    <scope>VARIANTS SCN4 LYS-116; GLN-189 AND ARG-260</scope>
</reference>
<reference key="12">
    <citation type="journal article" date="2012" name="Br. J. Haematol.">
        <title>Phenotypic heterogeneity and evidence of a founder effect associated with G6PC3 mutations in patients with severe congenital neutropenia.</title>
        <authorList>
            <person name="Smith B.N."/>
            <person name="Evans C."/>
            <person name="Ali A."/>
            <person name="Ancliff P.J."/>
            <person name="Hayee B."/>
            <person name="Segal A.W."/>
            <person name="Hall G."/>
            <person name="Kaya Z."/>
            <person name="Shakoori A.R."/>
            <person name="Linch D.C."/>
            <person name="Gale R.E."/>
        </authorList>
    </citation>
    <scope>VARIANTS SCN4 SER-44; 64-THR--ILE-70 DEL AND ARG-208</scope>
    <scope>CHARACTERIZATION OF VARIANTS SCN4 SER-44 AND 64-THR--ILE-70 DEL</scope>
</reference>
<reference key="13">
    <citation type="journal article" date="2012" name="J. Pediatr.">
        <title>Extended spectrum of human glucose-6-phosphatase catalytic subunit 3 deficiency: novel genotypes and phenotypic variability in severe congenital neutropenia.</title>
        <authorList>
            <person name="Boztug K."/>
            <person name="Rosenberg P.S."/>
            <person name="Dorda M."/>
            <person name="Banka S."/>
            <person name="Moulton T."/>
            <person name="Curtin J."/>
            <person name="Rezaei N."/>
            <person name="Corns J."/>
            <person name="Innis J.W."/>
            <person name="Avci Z."/>
            <person name="Tran H.C."/>
            <person name="Pellier I."/>
            <person name="Pierani P."/>
            <person name="Fruge R."/>
            <person name="Parvaneh N."/>
            <person name="Mamishi S."/>
            <person name="Mody R."/>
            <person name="Darbyshire P."/>
            <person name="Motwani J."/>
            <person name="Murray J."/>
            <person name="Buchanan G.R."/>
            <person name="Newman W.G."/>
            <person name="Alter B.P."/>
            <person name="Boxer L.A."/>
            <person name="Donadieu J."/>
            <person name="Welte K."/>
            <person name="Klein C."/>
        </authorList>
    </citation>
    <scope>VARIANTS SCN4 LEU-44; LYS-116; ILE-139; GLN-161; HIS-253; ARG-260 AND ASP-260</scope>
</reference>
<reference key="14">
    <citation type="journal article" date="2013" name="J. Clin. Immunol.">
        <title>A novel homozygous mutation in G6PC3 presenting as cyclic neutropenia and severe congenital neutropenia in the same family.</title>
        <authorList>
            <person name="Alangari A.A."/>
            <person name="Alsultan A."/>
            <person name="Osman M.E."/>
            <person name="Anazi S."/>
            <person name="Alkuraya F.S."/>
        </authorList>
    </citation>
    <scope>VARIANT SCN4 ARG-325</scope>
</reference>
<reference key="15">
    <citation type="journal article" date="2013" name="Mol. Genet. Metab.">
        <title>G6PC3 mutations cause non-syndromic severe congenital neutropenia.</title>
        <authorList>
            <person name="Banka S."/>
            <person name="Wynn R."/>
            <person name="Byers H."/>
            <person name="Arkwright P.D."/>
            <person name="Newman W.G."/>
        </authorList>
    </citation>
    <scope>VARIANTS SCN4 SER-44; THR-116 AND CYS-253</scope>
</reference>
<reference key="16">
    <citation type="journal article" date="2013" name="J. Pediatr. Hematol. Oncol.">
        <title>A novel G6PC3 gene mutation in a patient with severe congenital neutropenia.</title>
        <authorList>
            <person name="Aytekin C."/>
            <person name="Germeshausen M."/>
            <person name="Tuygun N."/>
            <person name="Dogu F."/>
            <person name="Ikinciogullari A."/>
        </authorList>
    </citation>
    <scope>VARIANT SCN4 PRO-154</scope>
</reference>
<reference key="17">
    <citation type="journal article" date="2015" name="Eur. J. Haematol.">
        <title>A novel G6PC3 gene mutation in severe congenital neutropenia: pancytopenia and variable bone marrow phenotype can also be part of this syndrome.</title>
        <authorList>
            <person name="Arikoglu T."/>
            <person name="Kuyucu N."/>
            <person name="Germeshausen M."/>
            <person name="Kuyucu S."/>
        </authorList>
    </citation>
    <scope>VARIANT SCN4 ARG-59</scope>
</reference>
<reference key="18">
    <citation type="journal article" date="2015" name="Mol. Genet. Metab.">
        <title>Functional analysis of mutations in a severe congenital neutropenia syndrome caused by glucose-6-phosphatase-beta deficiency.</title>
        <authorList>
            <person name="Lin S.R."/>
            <person name="Pan C.J."/>
            <person name="Mansfield B.C."/>
            <person name="Chou J.Y."/>
        </authorList>
    </citation>
    <scope>CHARACTERIZATION OF VARIANTS SCN4 LEU-44; SER-44; ILE-116; LYS-116; THR-116; VAL-116; ARG-118; ILE-139; PRO-154; GLN-161; PRO-185; GLN-189; ARG-208; HIS-253; ARG-260 AND ASP-260</scope>
</reference>
<feature type="chain" id="PRO_0000334512" description="Glucose-6-phosphatase 3">
    <location>
        <begin position="1"/>
        <end position="346"/>
    </location>
</feature>
<feature type="topological domain" description="Lumenal" evidence="1">
    <location>
        <begin position="1"/>
        <end position="24"/>
    </location>
</feature>
<feature type="transmembrane region" description="Helical" evidence="1">
    <location>
        <begin position="25"/>
        <end position="45"/>
    </location>
</feature>
<feature type="topological domain" description="Cytoplasmic" evidence="1">
    <location>
        <begin position="46"/>
        <end position="54"/>
    </location>
</feature>
<feature type="transmembrane region" description="Helical" evidence="1">
    <location>
        <begin position="55"/>
        <end position="75"/>
    </location>
</feature>
<feature type="topological domain" description="Lumenal" evidence="1">
    <location>
        <begin position="76"/>
        <end position="114"/>
    </location>
</feature>
<feature type="transmembrane region" description="Helical" evidence="1">
    <location>
        <begin position="115"/>
        <end position="135"/>
    </location>
</feature>
<feature type="topological domain" description="Cytoplasmic" evidence="1">
    <location>
        <begin position="136"/>
        <end position="146"/>
    </location>
</feature>
<feature type="transmembrane region" description="Helical" evidence="1">
    <location>
        <begin position="147"/>
        <end position="164"/>
    </location>
</feature>
<feature type="topological domain" description="Lumenal" evidence="1">
    <location>
        <begin position="165"/>
        <end position="169"/>
    </location>
</feature>
<feature type="transmembrane region" description="Helical" evidence="1">
    <location>
        <begin position="170"/>
        <end position="186"/>
    </location>
</feature>
<feature type="topological domain" description="Cytoplasmic" evidence="1">
    <location>
        <begin position="187"/>
        <end position="197"/>
    </location>
</feature>
<feature type="transmembrane region" description="Helical" evidence="1">
    <location>
        <begin position="198"/>
        <end position="218"/>
    </location>
</feature>
<feature type="topological domain" description="Lumenal" evidence="1">
    <location>
        <begin position="219"/>
        <end position="254"/>
    </location>
</feature>
<feature type="transmembrane region" description="Helical" evidence="1">
    <location>
        <begin position="255"/>
        <end position="273"/>
    </location>
</feature>
<feature type="topological domain" description="Cytoplasmic" evidence="1">
    <location>
        <begin position="274"/>
        <end position="283"/>
    </location>
</feature>
<feature type="transmembrane region" description="Helical" evidence="1">
    <location>
        <begin position="284"/>
        <end position="304"/>
    </location>
</feature>
<feature type="topological domain" description="Lumenal" evidence="1">
    <location>
        <begin position="305"/>
        <end position="307"/>
    </location>
</feature>
<feature type="transmembrane region" description="Helical" evidence="1">
    <location>
        <begin position="308"/>
        <end position="328"/>
    </location>
</feature>
<feature type="topological domain" description="Cytoplasmic" evidence="1">
    <location>
        <begin position="329"/>
        <end position="346"/>
    </location>
</feature>
<feature type="active site" description="Proton donor" evidence="1">
    <location>
        <position position="114"/>
    </location>
</feature>
<feature type="active site" description="Nucleophile" evidence="5">
    <location>
        <position position="167"/>
    </location>
</feature>
<feature type="binding site" evidence="1">
    <location>
        <position position="79"/>
    </location>
    <ligand>
        <name>substrate</name>
    </ligand>
</feature>
<feature type="binding site" evidence="1">
    <location>
        <position position="161"/>
    </location>
    <ligand>
        <name>substrate</name>
    </ligand>
</feature>
<feature type="sequence variant" id="VAR_073174" description="In SCN4; complete loss of activity; dbSNP:rs762019955." evidence="11 17">
    <original>P</original>
    <variation>L</variation>
    <location>
        <position position="44"/>
    </location>
</feature>
<feature type="sequence variant" id="VAR_072753" description="In SCN4; complete loss of activity; purified neutrophils from patients have higher levels of spontaneous and staurosporine-induced apoptosis than controls; dbSNP:rs775224457." evidence="12 14 17">
    <original>P</original>
    <variation>S</variation>
    <location>
        <position position="44"/>
    </location>
</feature>
<feature type="sequence variant" id="VAR_072754" description="In SCN4; dbSNP:rs752966267." evidence="16">
    <original>W</original>
    <variation>R</variation>
    <location>
        <position position="59"/>
    </location>
</feature>
<feature type="sequence variant" id="VAR_072755" description="In SCN4; purified neutrophils from patients have higher levels of spontaneous and staurosporine-induced apoptosis than controls." evidence="12">
    <location>
        <begin position="64"/>
        <end position="70"/>
    </location>
</feature>
<feature type="sequence variant" id="VAR_073175" description="In SCN4; complete loss of activity; dbSNP:rs1373865222." evidence="17">
    <original>M</original>
    <variation>I</variation>
    <location>
        <position position="116"/>
    </location>
</feature>
<feature type="sequence variant" id="VAR_064508" description="In SCN4; the patient also carries mutation Thr-166 in ELANE; complete loss of activity." evidence="8 11 17">
    <original>M</original>
    <variation>K</variation>
    <location>
        <position position="116"/>
    </location>
</feature>
<feature type="sequence variant" id="VAR_072756" description="In SCN4; complete loss of activity." evidence="14 17">
    <original>M</original>
    <variation>T</variation>
    <location>
        <position position="116"/>
    </location>
</feature>
<feature type="sequence variant" id="VAR_064509" description="In DURSS and SCN4; complete loss of activity; dbSNP:rs267606834." evidence="10 17">
    <original>M</original>
    <variation>V</variation>
    <location>
        <position position="116"/>
    </location>
</feature>
<feature type="sequence variant" id="VAR_073176" description="In SCN4; complete loss of activity; dbSNP:rs766706036." evidence="17">
    <original>T</original>
    <variation>R</variation>
    <location>
        <position position="118"/>
    </location>
</feature>
<feature type="sequence variant" id="VAR_072757" description="In SCN4; partial loss of activity." evidence="11 17">
    <original>S</original>
    <variation>I</variation>
    <location>
        <position position="139"/>
    </location>
</feature>
<feature type="sequence variant" id="VAR_072758" description="In SCN4; complete loss of activity." evidence="13 17">
    <original>L</original>
    <variation>P</variation>
    <location>
        <position position="154"/>
    </location>
</feature>
<feature type="sequence variant" id="VAR_073177" description="In SCN4; complete loss of activity; dbSNP:rs1485073209." evidence="11 17">
    <original>R</original>
    <variation>Q</variation>
    <location>
        <position position="161"/>
    </location>
</feature>
<feature type="sequence variant" id="VAR_055156" description="In SCN4; complete loss of activity; dbSNP:rs118203969." evidence="7 17">
    <original>L</original>
    <variation>P</variation>
    <location>
        <position position="185"/>
    </location>
</feature>
<feature type="sequence variant" id="VAR_064510" description="In SCN4; partial loss of activity; dbSNP:rs140294222." evidence="8 17">
    <original>R</original>
    <variation>Q</variation>
    <location>
        <position position="189"/>
    </location>
</feature>
<feature type="sequence variant" id="VAR_072759" description="In SCN4; complete loss of activity." evidence="12 17">
    <original>L</original>
    <variation>R</variation>
    <location>
        <position position="208"/>
    </location>
</feature>
<feature type="sequence variant" id="VAR_043378" description="In dbSNP:rs34406052.">
    <original>T</original>
    <variation>I</variation>
    <location>
        <position position="216"/>
    </location>
</feature>
<feature type="sequence variant" id="VAR_073178" description="In SCN4; dbSNP:rs765927570." evidence="14">
    <original>R</original>
    <variation>C</variation>
    <location>
        <position position="253"/>
    </location>
</feature>
<feature type="sequence variant" id="VAR_055157" description="In SCN4; complete loss of activity; peripheral-blood patient neutrophils have an increased rate of spontaneous apoptosis; transmission electron microscopy of patient bone marrow cells shows an enlarged rough endoplasmic reticulum in myeloid progenitor cells consistent with increased ER stress; dbSNP:rs118203968." evidence="7 11 17">
    <original>R</original>
    <variation>H</variation>
    <location>
        <position position="253"/>
    </location>
</feature>
<feature type="sequence variant" id="VAR_072760" description="In SCN4; complete loss of activity." evidence="11 17">
    <original>G</original>
    <variation>D</variation>
    <location>
        <position position="260"/>
    </location>
</feature>
<feature type="sequence variant" id="VAR_064511" description="In SCN4; complete loss of activity; dbSNP:rs200478425." evidence="8 9 11 17">
    <original>G</original>
    <variation>R</variation>
    <location>
        <position position="260"/>
    </location>
</feature>
<feature type="sequence variant" id="VAR_055158" description="In SCN4; dbSNP:rs118203971." evidence="7">
    <original>G</original>
    <variation>R</variation>
    <location>
        <position position="262"/>
    </location>
</feature>
<feature type="sequence variant" id="VAR_072761" description="In SCN4." evidence="15">
    <original>L</original>
    <variation>R</variation>
    <location>
        <position position="325"/>
    </location>
</feature>
<feature type="mutagenesis site" description="Loss of catalytic activity." evidence="4">
    <original>R</original>
    <variation>A</variation>
    <location>
        <position position="79"/>
    </location>
</feature>
<feature type="mutagenesis site" description="Loss of catalytic activity." evidence="4">
    <original>H</original>
    <variation>A</variation>
    <location>
        <position position="114"/>
    </location>
</feature>
<feature type="mutagenesis site" description="Loss of catalytic activity." evidence="4">
    <original>H</original>
    <variation>A</variation>
    <location>
        <position position="167"/>
    </location>
</feature>
<keyword id="KW-0225">Disease variant</keyword>
<keyword id="KW-0256">Endoplasmic reticulum</keyword>
<keyword id="KW-0312">Gluconeogenesis</keyword>
<keyword id="KW-0378">Hydrolase</keyword>
<keyword id="KW-0472">Membrane</keyword>
<keyword id="KW-1267">Proteomics identification</keyword>
<keyword id="KW-1185">Reference proteome</keyword>
<keyword id="KW-0812">Transmembrane</keyword>
<keyword id="KW-1133">Transmembrane helix</keyword>
<comment type="function">
    <text evidence="2 3 4">Hydrolyzes glucose-6-phosphate to glucose in the endoplasmic reticulum. May form with the glucose-6-phosphate transporter (SLC37A4/G6PT) a ubiquitously expressed complex responsible for glucose production through glycogenolysis and gluconeogenesis. Probably required for normal neutrophil function.</text>
</comment>
<comment type="catalytic activity">
    <reaction evidence="3">
        <text>D-glucose 6-phosphate + H2O = D-glucose + phosphate</text>
        <dbReference type="Rhea" id="RHEA:16689"/>
        <dbReference type="ChEBI" id="CHEBI:4167"/>
        <dbReference type="ChEBI" id="CHEBI:15377"/>
        <dbReference type="ChEBI" id="CHEBI:43474"/>
        <dbReference type="ChEBI" id="CHEBI:61548"/>
        <dbReference type="EC" id="3.1.3.9"/>
    </reaction>
</comment>
<comment type="activity regulation">
    <text evidence="4">Inhibited by vanadate.</text>
</comment>
<comment type="biophysicochemical properties">
    <kinetics>
        <KM evidence="3 4">1 mM for glucose-6-phosphate (at pH 5.5)</KM>
        <KM evidence="3 4">2 mM for glucose-6-phosphate (at pH 6.5)</KM>
        <text>8 times less active compared to G6PC1 under the same experimental conditions.</text>
    </kinetics>
</comment>
<comment type="pathway">
    <text>Carbohydrate biosynthesis; gluconeogenesis.</text>
</comment>
<comment type="subcellular location">
    <subcellularLocation>
        <location evidence="4">Endoplasmic reticulum membrane</location>
        <topology evidence="4">Multi-pass membrane protein</topology>
    </subcellularLocation>
</comment>
<comment type="tissue specificity">
    <text evidence="2 3 6">Ubiquitously expressed. Highly expressed in skeletal muscle, at intermediate levels in heart, brain, placenta, kidney, colon, thymus, spleen and pancreas. Also detected in testis, prostate, ovary, liver, lung, small intestine and peripheral blood lymphocytes.</text>
</comment>
<comment type="disease" evidence="7 8 9 11 12 13 14 15 16 17">
    <disease id="DI-01258">
        <name>Neutropenia, severe congenital 4, autosomal recessive</name>
        <acronym>SCN4</acronym>
        <description>A disorder of hematopoiesis characterized by maturation arrest of granulopoiesis at the level of promyelocytes with peripheral blood absolute neutrophil counts below 0.5 x 10(9)/l and early onset of severe bacterial infections.</description>
        <dbReference type="MIM" id="612541"/>
    </disease>
    <text>The disease is caused by variants affecting the gene represented in this entry.</text>
</comment>
<comment type="disease" evidence="10">
    <disease id="DI-02930">
        <name>Dursun syndrome</name>
        <acronym>DURSS</acronym>
        <description>A disease characterized by pulmonary arterial hypertension, cardiac abnormalities including secundum-type atrial septal defect, intermittent neutropenia, lymphopenia, monocytosis and anemia.</description>
        <dbReference type="MIM" id="612541"/>
    </disease>
    <text>The disease is caused by variants affecting the gene represented in this entry.</text>
</comment>
<comment type="similarity">
    <text evidence="18">Belongs to the glucose-6-phosphatase family.</text>
</comment>
<comment type="caution">
    <text evidence="18">According to PubMed:12370122, it has no hydrolytic activity.</text>
</comment>
<sequence length="346" mass="38735">MESTLGAGIVIAEALQNQLAWLENVWLWITFLGDPKILFLFYFPAAYYASRRVGIAVLWISLITEWLNLIFKWFLFGDRPFWWVHESGYYSQAPAQVHQFPSSCETGPGSPSGHCMITGAALWPIMTALSSQVATRARSRWVRVMPSLAYCTFLLAVGLSRIFILAHFPHQVLAGLITGAVLGWLMTPRVPMERELSFYGLTALALMLGTSLIYWTLFTLGLDLSWSISLAFKWCERPEWIHVDSRPFASLSRDSGAALGLGIALHSPCYAQVRRAQLGNGQKIACLVLAMGLLGPLDWLGHPPQISLFYIFNFLKYTLWPCLVLALVPWAVHMFSAQEAPPIHSS</sequence>
<accession>Q9BUM1</accession>
<accession>Q8WU15</accession>
<protein>
    <recommendedName>
        <fullName>Glucose-6-phosphatase 3</fullName>
        <shortName>G-6-Pase 3</shortName>
        <shortName>G6Pase 3</shortName>
        <ecNumber>3.1.3.9</ecNumber>
    </recommendedName>
    <alternativeName>
        <fullName>Glucose-6-phosphatase beta</fullName>
        <shortName>G6Pase-beta</shortName>
    </alternativeName>
    <alternativeName>
        <fullName>Ubiquitous glucose-6-phosphatase catalytic subunit-related protein</fullName>
    </alternativeName>
</protein>
<gene>
    <name type="primary">G6PC3</name>
    <name type="synonym">UGRP</name>
</gene>
<name>G6PC3_HUMAN</name>
<dbReference type="EC" id="3.1.3.9"/>
<dbReference type="EMBL" id="CH471178">
    <property type="protein sequence ID" value="EAW51638.1"/>
    <property type="molecule type" value="Genomic_DNA"/>
</dbReference>
<dbReference type="EMBL" id="BC002494">
    <property type="protein sequence ID" value="AAH02494.2"/>
    <property type="molecule type" value="mRNA"/>
</dbReference>
<dbReference type="EMBL" id="BC021574">
    <property type="protein sequence ID" value="AAH21574.1"/>
    <property type="molecule type" value="mRNA"/>
</dbReference>
<dbReference type="CCDS" id="CCDS11476.1"/>
<dbReference type="RefSeq" id="NP_612396.1">
    <property type="nucleotide sequence ID" value="NM_138387.4"/>
</dbReference>
<dbReference type="SMR" id="Q9BUM1"/>
<dbReference type="BioGRID" id="124957">
    <property type="interactions" value="17"/>
</dbReference>
<dbReference type="FunCoup" id="Q9BUM1">
    <property type="interactions" value="1313"/>
</dbReference>
<dbReference type="IntAct" id="Q9BUM1">
    <property type="interactions" value="12"/>
</dbReference>
<dbReference type="MINT" id="Q9BUM1"/>
<dbReference type="STRING" id="9606.ENSP00000269097"/>
<dbReference type="DEPOD" id="G6PC3"/>
<dbReference type="iPTMnet" id="Q9BUM1"/>
<dbReference type="PhosphoSitePlus" id="Q9BUM1"/>
<dbReference type="SwissPalm" id="Q9BUM1"/>
<dbReference type="BioMuta" id="G6PC3"/>
<dbReference type="DMDM" id="74733234"/>
<dbReference type="jPOST" id="Q9BUM1"/>
<dbReference type="MassIVE" id="Q9BUM1"/>
<dbReference type="PaxDb" id="9606-ENSP00000269097"/>
<dbReference type="PeptideAtlas" id="Q9BUM1"/>
<dbReference type="ProteomicsDB" id="79110"/>
<dbReference type="Pumba" id="Q9BUM1"/>
<dbReference type="Antibodypedia" id="59289">
    <property type="antibodies" value="78 antibodies from 18 providers"/>
</dbReference>
<dbReference type="DNASU" id="92579"/>
<dbReference type="Ensembl" id="ENST00000269097.9">
    <property type="protein sequence ID" value="ENSP00000269097.3"/>
    <property type="gene ID" value="ENSG00000141349.10"/>
</dbReference>
<dbReference type="GeneID" id="92579"/>
<dbReference type="KEGG" id="hsa:92579"/>
<dbReference type="MANE-Select" id="ENST00000269097.9">
    <property type="protein sequence ID" value="ENSP00000269097.3"/>
    <property type="RefSeq nucleotide sequence ID" value="NM_138387.4"/>
    <property type="RefSeq protein sequence ID" value="NP_612396.1"/>
</dbReference>
<dbReference type="UCSC" id="uc002iex.4">
    <property type="organism name" value="human"/>
</dbReference>
<dbReference type="AGR" id="HGNC:24861"/>
<dbReference type="CTD" id="92579"/>
<dbReference type="DisGeNET" id="92579"/>
<dbReference type="GeneCards" id="G6PC3"/>
<dbReference type="GeneReviews" id="G6PC3"/>
<dbReference type="HGNC" id="HGNC:24861">
    <property type="gene designation" value="G6PC3"/>
</dbReference>
<dbReference type="HPA" id="ENSG00000141349">
    <property type="expression patterns" value="Low tissue specificity"/>
</dbReference>
<dbReference type="MalaCards" id="G6PC3"/>
<dbReference type="MIM" id="611045">
    <property type="type" value="gene"/>
</dbReference>
<dbReference type="MIM" id="612541">
    <property type="type" value="phenotype"/>
</dbReference>
<dbReference type="neXtProt" id="NX_Q9BUM1"/>
<dbReference type="OpenTargets" id="ENSG00000141349"/>
<dbReference type="Orphanet" id="331176">
    <property type="disease" value="Severe congenital neutropenia due to G6PC3 deficiency"/>
</dbReference>
<dbReference type="PharmGKB" id="PA134968446"/>
<dbReference type="VEuPathDB" id="HostDB:ENSG00000141349"/>
<dbReference type="eggNOG" id="ENOG502QS5D">
    <property type="taxonomic scope" value="Eukaryota"/>
</dbReference>
<dbReference type="GeneTree" id="ENSGT00950000183150"/>
<dbReference type="InParanoid" id="Q9BUM1"/>
<dbReference type="OMA" id="KKWCSRA"/>
<dbReference type="OrthoDB" id="6416209at2759"/>
<dbReference type="PAN-GO" id="Q9BUM1">
    <property type="GO annotations" value="4 GO annotations based on evolutionary models"/>
</dbReference>
<dbReference type="PhylomeDB" id="Q9BUM1"/>
<dbReference type="TreeFam" id="TF324388"/>
<dbReference type="BioCyc" id="MetaCyc:HS13873-MONOMER"/>
<dbReference type="BRENDA" id="3.1.3.9">
    <property type="organism ID" value="2681"/>
</dbReference>
<dbReference type="PathwayCommons" id="Q9BUM1"/>
<dbReference type="Reactome" id="R-HSA-3282872">
    <property type="pathway name" value="Severe congenital neutropenia type 4 (G6PC3)"/>
</dbReference>
<dbReference type="Reactome" id="R-HSA-70263">
    <property type="pathway name" value="Gluconeogenesis"/>
</dbReference>
<dbReference type="SABIO-RK" id="Q9BUM1"/>
<dbReference type="SignaLink" id="Q9BUM1"/>
<dbReference type="SIGNOR" id="Q9BUM1"/>
<dbReference type="UniPathway" id="UPA00138"/>
<dbReference type="BioGRID-ORCS" id="92579">
    <property type="hits" value="11 hits in 1171 CRISPR screens"/>
</dbReference>
<dbReference type="ChiTaRS" id="G6PC3">
    <property type="organism name" value="human"/>
</dbReference>
<dbReference type="GeneWiki" id="G6PC3"/>
<dbReference type="GenomeRNAi" id="92579"/>
<dbReference type="Pharos" id="Q9BUM1">
    <property type="development level" value="Tbio"/>
</dbReference>
<dbReference type="PRO" id="PR:Q9BUM1"/>
<dbReference type="Proteomes" id="UP000005640">
    <property type="component" value="Chromosome 17"/>
</dbReference>
<dbReference type="RNAct" id="Q9BUM1">
    <property type="molecule type" value="protein"/>
</dbReference>
<dbReference type="Bgee" id="ENSG00000141349">
    <property type="expression patterns" value="Expressed in adenohypophysis and 194 other cell types or tissues"/>
</dbReference>
<dbReference type="ExpressionAtlas" id="Q9BUM1">
    <property type="expression patterns" value="baseline and differential"/>
</dbReference>
<dbReference type="GO" id="GO:0005783">
    <property type="term" value="C:endoplasmic reticulum"/>
    <property type="evidence" value="ECO:0000314"/>
    <property type="project" value="HPA"/>
</dbReference>
<dbReference type="GO" id="GO:0005789">
    <property type="term" value="C:endoplasmic reticulum membrane"/>
    <property type="evidence" value="ECO:0000304"/>
    <property type="project" value="Reactome"/>
</dbReference>
<dbReference type="GO" id="GO:0016020">
    <property type="term" value="C:membrane"/>
    <property type="evidence" value="ECO:0007005"/>
    <property type="project" value="UniProtKB"/>
</dbReference>
<dbReference type="GO" id="GO:0004346">
    <property type="term" value="F:glucose-6-phosphatase activity"/>
    <property type="evidence" value="ECO:0000315"/>
    <property type="project" value="UniProtKB"/>
</dbReference>
<dbReference type="GO" id="GO:0006094">
    <property type="term" value="P:gluconeogenesis"/>
    <property type="evidence" value="ECO:0000318"/>
    <property type="project" value="GO_Central"/>
</dbReference>
<dbReference type="GO" id="GO:0051156">
    <property type="term" value="P:glucose 6-phosphate metabolic process"/>
    <property type="evidence" value="ECO:0000318"/>
    <property type="project" value="GO_Central"/>
</dbReference>
<dbReference type="GO" id="GO:0015760">
    <property type="term" value="P:glucose-6-phosphate transport"/>
    <property type="evidence" value="ECO:0007669"/>
    <property type="project" value="Ensembl"/>
</dbReference>
<dbReference type="CDD" id="cd03381">
    <property type="entry name" value="PAP2_glucose_6_phosphatase"/>
    <property type="match status" value="1"/>
</dbReference>
<dbReference type="FunFam" id="1.20.144.10:FF:000018">
    <property type="entry name" value="Glucose-6-phosphatase"/>
    <property type="match status" value="1"/>
</dbReference>
<dbReference type="Gene3D" id="1.20.144.10">
    <property type="entry name" value="Phosphatidic acid phosphatase type 2/haloperoxidase"/>
    <property type="match status" value="1"/>
</dbReference>
<dbReference type="InterPro" id="IPR016275">
    <property type="entry name" value="Glucose-6-phosphatase"/>
</dbReference>
<dbReference type="InterPro" id="IPR036938">
    <property type="entry name" value="P_Acid_Pase_2/haloperoxi_sf"/>
</dbReference>
<dbReference type="InterPro" id="IPR000326">
    <property type="entry name" value="P_Acid_Pase_2/haloperoxidase"/>
</dbReference>
<dbReference type="PANTHER" id="PTHR12591">
    <property type="entry name" value="GLUCOSE-6-PHOSPHATASE"/>
    <property type="match status" value="1"/>
</dbReference>
<dbReference type="PANTHER" id="PTHR12591:SF2">
    <property type="entry name" value="GLUCOSE-6-PHOSPHATASE 3"/>
    <property type="match status" value="1"/>
</dbReference>
<dbReference type="Pfam" id="PF01569">
    <property type="entry name" value="PAP2"/>
    <property type="match status" value="1"/>
</dbReference>
<dbReference type="PIRSF" id="PIRSF000905">
    <property type="entry name" value="Glucose-6-phosphatase"/>
    <property type="match status" value="1"/>
</dbReference>
<dbReference type="SMART" id="SM00014">
    <property type="entry name" value="acidPPc"/>
    <property type="match status" value="1"/>
</dbReference>
<dbReference type="SUPFAM" id="SSF48317">
    <property type="entry name" value="Acid phosphatase/Vanadium-dependent haloperoxidase"/>
    <property type="match status" value="1"/>
</dbReference>
<organism>
    <name type="scientific">Homo sapiens</name>
    <name type="common">Human</name>
    <dbReference type="NCBI Taxonomy" id="9606"/>
    <lineage>
        <taxon>Eukaryota</taxon>
        <taxon>Metazoa</taxon>
        <taxon>Chordata</taxon>
        <taxon>Craniata</taxon>
        <taxon>Vertebrata</taxon>
        <taxon>Euteleostomi</taxon>
        <taxon>Mammalia</taxon>
        <taxon>Eutheria</taxon>
        <taxon>Euarchontoglires</taxon>
        <taxon>Primates</taxon>
        <taxon>Haplorrhini</taxon>
        <taxon>Catarrhini</taxon>
        <taxon>Hominidae</taxon>
        <taxon>Homo</taxon>
    </lineage>
</organism>
<evidence type="ECO:0000255" key="1"/>
<evidence type="ECO:0000269" key="2">
    <source>
    </source>
</evidence>
<evidence type="ECO:0000269" key="3">
    <source>
    </source>
</evidence>
<evidence type="ECO:0000269" key="4">
    <source>
    </source>
</evidence>
<evidence type="ECO:0000269" key="5">
    <source>
    </source>
</evidence>
<evidence type="ECO:0000269" key="6">
    <source>
    </source>
</evidence>
<evidence type="ECO:0000269" key="7">
    <source>
    </source>
</evidence>
<evidence type="ECO:0000269" key="8">
    <source>
    </source>
</evidence>
<evidence type="ECO:0000269" key="9">
    <source>
    </source>
</evidence>
<evidence type="ECO:0000269" key="10">
    <source>
    </source>
</evidence>
<evidence type="ECO:0000269" key="11">
    <source>
    </source>
</evidence>
<evidence type="ECO:0000269" key="12">
    <source>
    </source>
</evidence>
<evidence type="ECO:0000269" key="13">
    <source>
    </source>
</evidence>
<evidence type="ECO:0000269" key="14">
    <source>
    </source>
</evidence>
<evidence type="ECO:0000269" key="15">
    <source>
    </source>
</evidence>
<evidence type="ECO:0000269" key="16">
    <source>
    </source>
</evidence>
<evidence type="ECO:0000269" key="17">
    <source>
    </source>
</evidence>
<evidence type="ECO:0000305" key="18"/>
<proteinExistence type="evidence at protein level"/>